<comment type="function">
    <text evidence="1">NDH-1 shuttles electrons from NADH, via FMN and iron-sulfur (Fe-S) centers, to quinones in the respiratory chain. The immediate electron acceptor for the enzyme in this species is believed to be ubiquinone. Couples the redox reaction to proton translocation (for every two electrons transferred, four hydrogen ions are translocated across the cytoplasmic membrane), and thus conserves the redox energy in a proton gradient. This subunit may bind ubiquinone.</text>
</comment>
<comment type="catalytic activity">
    <reaction evidence="1">
        <text>a quinone + NADH + 5 H(+)(in) = a quinol + NAD(+) + 4 H(+)(out)</text>
        <dbReference type="Rhea" id="RHEA:57888"/>
        <dbReference type="ChEBI" id="CHEBI:15378"/>
        <dbReference type="ChEBI" id="CHEBI:24646"/>
        <dbReference type="ChEBI" id="CHEBI:57540"/>
        <dbReference type="ChEBI" id="CHEBI:57945"/>
        <dbReference type="ChEBI" id="CHEBI:132124"/>
    </reaction>
</comment>
<comment type="subunit">
    <text evidence="1">NDH-1 is composed of 13 different subunits. Subunits NuoA, H, J, K, L, M, N constitute the membrane sector of the complex.</text>
</comment>
<comment type="subcellular location">
    <subcellularLocation>
        <location evidence="1">Cell inner membrane</location>
        <topology evidence="1">Multi-pass membrane protein</topology>
    </subcellularLocation>
</comment>
<comment type="similarity">
    <text evidence="1">Belongs to the complex I subunit 1 family.</text>
</comment>
<sequence>MSWISPELIEILLTILKAVVILLVVVTCGAFMSFGERRLLGLFQNRYGPNRVGWGGSLQLVADMIKMFFKEDWIPKFSDRVIFTLAPMIAFTSLLLAFAIVPVSPGWVVADLNIGILFFLMMAGLAVYAVLFAGWSSNNKYSLLGAMRASAQTLSYEVFLGLSLMGVVAQAGSFNMTDIVNSQAHVWNVIPQFFGFITFAIAGVAVCHRHPFDQPEAEQELADGYHIEYSGMKFGLFFVGEYIGIVTISALMVTLFFGGWQGPLLPPFIWFALKTAFFMMMFILIRASLPRPRYDQVMSFGWKICLPLTLINLLVTAAVILWQAQ</sequence>
<name>NUOH_SHIDS</name>
<gene>
    <name evidence="1" type="primary">nuoH</name>
    <name type="ordered locus">SDY_2478</name>
</gene>
<protein>
    <recommendedName>
        <fullName evidence="1">NADH-quinone oxidoreductase subunit H</fullName>
        <ecNumber evidence="1">7.1.1.-</ecNumber>
    </recommendedName>
    <alternativeName>
        <fullName evidence="1">NADH dehydrogenase I subunit H</fullName>
    </alternativeName>
    <alternativeName>
        <fullName evidence="1">NDH-1 subunit H</fullName>
    </alternativeName>
</protein>
<reference key="1">
    <citation type="journal article" date="2005" name="Nucleic Acids Res.">
        <title>Genome dynamics and diversity of Shigella species, the etiologic agents of bacillary dysentery.</title>
        <authorList>
            <person name="Yang F."/>
            <person name="Yang J."/>
            <person name="Zhang X."/>
            <person name="Chen L."/>
            <person name="Jiang Y."/>
            <person name="Yan Y."/>
            <person name="Tang X."/>
            <person name="Wang J."/>
            <person name="Xiong Z."/>
            <person name="Dong J."/>
            <person name="Xue Y."/>
            <person name="Zhu Y."/>
            <person name="Xu X."/>
            <person name="Sun L."/>
            <person name="Chen S."/>
            <person name="Nie H."/>
            <person name="Peng J."/>
            <person name="Xu J."/>
            <person name="Wang Y."/>
            <person name="Yuan Z."/>
            <person name="Wen Y."/>
            <person name="Yao Z."/>
            <person name="Shen Y."/>
            <person name="Qiang B."/>
            <person name="Hou Y."/>
            <person name="Yu J."/>
            <person name="Jin Q."/>
        </authorList>
    </citation>
    <scope>NUCLEOTIDE SEQUENCE [LARGE SCALE GENOMIC DNA]</scope>
    <source>
        <strain>Sd197</strain>
    </source>
</reference>
<feature type="chain" id="PRO_0000244953" description="NADH-quinone oxidoreductase subunit H">
    <location>
        <begin position="1"/>
        <end position="325"/>
    </location>
</feature>
<feature type="transmembrane region" description="Helical" evidence="1">
    <location>
        <begin position="11"/>
        <end position="31"/>
    </location>
</feature>
<feature type="transmembrane region" description="Helical" evidence="1">
    <location>
        <begin position="81"/>
        <end position="101"/>
    </location>
</feature>
<feature type="transmembrane region" description="Helical" evidence="1">
    <location>
        <begin position="114"/>
        <end position="134"/>
    </location>
</feature>
<feature type="transmembrane region" description="Helical" evidence="1">
    <location>
        <begin position="154"/>
        <end position="174"/>
    </location>
</feature>
<feature type="transmembrane region" description="Helical" evidence="1">
    <location>
        <begin position="186"/>
        <end position="206"/>
    </location>
</feature>
<feature type="transmembrane region" description="Helical" evidence="1">
    <location>
        <begin position="237"/>
        <end position="257"/>
    </location>
</feature>
<feature type="transmembrane region" description="Helical" evidence="1">
    <location>
        <begin position="265"/>
        <end position="285"/>
    </location>
</feature>
<feature type="transmembrane region" description="Helical" evidence="1">
    <location>
        <begin position="304"/>
        <end position="324"/>
    </location>
</feature>
<organism>
    <name type="scientific">Shigella dysenteriae serotype 1 (strain Sd197)</name>
    <dbReference type="NCBI Taxonomy" id="300267"/>
    <lineage>
        <taxon>Bacteria</taxon>
        <taxon>Pseudomonadati</taxon>
        <taxon>Pseudomonadota</taxon>
        <taxon>Gammaproteobacteria</taxon>
        <taxon>Enterobacterales</taxon>
        <taxon>Enterobacteriaceae</taxon>
        <taxon>Shigella</taxon>
    </lineage>
</organism>
<evidence type="ECO:0000255" key="1">
    <source>
        <dbReference type="HAMAP-Rule" id="MF_01350"/>
    </source>
</evidence>
<proteinExistence type="inferred from homology"/>
<keyword id="KW-0997">Cell inner membrane</keyword>
<keyword id="KW-1003">Cell membrane</keyword>
<keyword id="KW-0472">Membrane</keyword>
<keyword id="KW-0520">NAD</keyword>
<keyword id="KW-0874">Quinone</keyword>
<keyword id="KW-1185">Reference proteome</keyword>
<keyword id="KW-1278">Translocase</keyword>
<keyword id="KW-0812">Transmembrane</keyword>
<keyword id="KW-1133">Transmembrane helix</keyword>
<keyword id="KW-0830">Ubiquinone</keyword>
<dbReference type="EC" id="7.1.1.-" evidence="1"/>
<dbReference type="EMBL" id="CP000034">
    <property type="protein sequence ID" value="ABB62548.1"/>
    <property type="molecule type" value="Genomic_DNA"/>
</dbReference>
<dbReference type="RefSeq" id="WP_000118507.1">
    <property type="nucleotide sequence ID" value="NC_007606.1"/>
</dbReference>
<dbReference type="RefSeq" id="YP_404039.1">
    <property type="nucleotide sequence ID" value="NC_007606.1"/>
</dbReference>
<dbReference type="SMR" id="Q32DQ7"/>
<dbReference type="STRING" id="300267.SDY_2478"/>
<dbReference type="EnsemblBacteria" id="ABB62548">
    <property type="protein sequence ID" value="ABB62548"/>
    <property type="gene ID" value="SDY_2478"/>
</dbReference>
<dbReference type="GeneID" id="93774892"/>
<dbReference type="KEGG" id="sdy:SDY_2478"/>
<dbReference type="PATRIC" id="fig|300267.13.peg.2989"/>
<dbReference type="HOGENOM" id="CLU_015134_0_1_6"/>
<dbReference type="Proteomes" id="UP000002716">
    <property type="component" value="Chromosome"/>
</dbReference>
<dbReference type="GO" id="GO:0005886">
    <property type="term" value="C:plasma membrane"/>
    <property type="evidence" value="ECO:0007669"/>
    <property type="project" value="UniProtKB-SubCell"/>
</dbReference>
<dbReference type="GO" id="GO:0003954">
    <property type="term" value="F:NADH dehydrogenase activity"/>
    <property type="evidence" value="ECO:0007669"/>
    <property type="project" value="TreeGrafter"/>
</dbReference>
<dbReference type="GO" id="GO:0016655">
    <property type="term" value="F:oxidoreductase activity, acting on NAD(P)H, quinone or similar compound as acceptor"/>
    <property type="evidence" value="ECO:0007669"/>
    <property type="project" value="UniProtKB-UniRule"/>
</dbReference>
<dbReference type="GO" id="GO:0048038">
    <property type="term" value="F:quinone binding"/>
    <property type="evidence" value="ECO:0007669"/>
    <property type="project" value="UniProtKB-KW"/>
</dbReference>
<dbReference type="GO" id="GO:0009060">
    <property type="term" value="P:aerobic respiration"/>
    <property type="evidence" value="ECO:0007669"/>
    <property type="project" value="TreeGrafter"/>
</dbReference>
<dbReference type="HAMAP" id="MF_01350">
    <property type="entry name" value="NDH1_NuoH"/>
    <property type="match status" value="1"/>
</dbReference>
<dbReference type="InterPro" id="IPR001694">
    <property type="entry name" value="NADH_UbQ_OxRdtase_su1/FPO"/>
</dbReference>
<dbReference type="InterPro" id="IPR018086">
    <property type="entry name" value="NADH_UbQ_OxRdtase_su1_CS"/>
</dbReference>
<dbReference type="NCBIfam" id="NF004740">
    <property type="entry name" value="PRK06076.1-1"/>
    <property type="match status" value="1"/>
</dbReference>
<dbReference type="NCBIfam" id="NF004741">
    <property type="entry name" value="PRK06076.1-2"/>
    <property type="match status" value="1"/>
</dbReference>
<dbReference type="PANTHER" id="PTHR11432">
    <property type="entry name" value="NADH DEHYDROGENASE SUBUNIT 1"/>
    <property type="match status" value="1"/>
</dbReference>
<dbReference type="PANTHER" id="PTHR11432:SF3">
    <property type="entry name" value="NADH-UBIQUINONE OXIDOREDUCTASE CHAIN 1"/>
    <property type="match status" value="1"/>
</dbReference>
<dbReference type="Pfam" id="PF00146">
    <property type="entry name" value="NADHdh"/>
    <property type="match status" value="1"/>
</dbReference>
<dbReference type="PROSITE" id="PS00667">
    <property type="entry name" value="COMPLEX1_ND1_1"/>
    <property type="match status" value="1"/>
</dbReference>
<dbReference type="PROSITE" id="PS00668">
    <property type="entry name" value="COMPLEX1_ND1_2"/>
    <property type="match status" value="1"/>
</dbReference>
<accession>Q32DQ7</accession>